<proteinExistence type="inferred from homology"/>
<comment type="similarity">
    <text evidence="1">Belongs to the UPF0332 family.</text>
</comment>
<accession>O59008</accession>
<evidence type="ECO:0000305" key="1"/>
<organism>
    <name type="scientific">Pyrococcus horikoshii (strain ATCC 700860 / DSM 12428 / JCM 9974 / NBRC 100139 / OT-3)</name>
    <dbReference type="NCBI Taxonomy" id="70601"/>
    <lineage>
        <taxon>Archaea</taxon>
        <taxon>Methanobacteriati</taxon>
        <taxon>Methanobacteriota</taxon>
        <taxon>Thermococci</taxon>
        <taxon>Thermococcales</taxon>
        <taxon>Thermococcaceae</taxon>
        <taxon>Pyrococcus</taxon>
    </lineage>
</organism>
<protein>
    <recommendedName>
        <fullName>UPF0332 protein PH1297</fullName>
    </recommendedName>
</protein>
<feature type="chain" id="PRO_0000159641" description="UPF0332 protein PH1297">
    <location>
        <begin position="1"/>
        <end position="142"/>
    </location>
</feature>
<reference key="1">
    <citation type="journal article" date="1998" name="DNA Res.">
        <title>Complete sequence and gene organization of the genome of a hyper-thermophilic archaebacterium, Pyrococcus horikoshii OT3.</title>
        <authorList>
            <person name="Kawarabayasi Y."/>
            <person name="Sawada M."/>
            <person name="Horikawa H."/>
            <person name="Haikawa Y."/>
            <person name="Hino Y."/>
            <person name="Yamamoto S."/>
            <person name="Sekine M."/>
            <person name="Baba S."/>
            <person name="Kosugi H."/>
            <person name="Hosoyama A."/>
            <person name="Nagai Y."/>
            <person name="Sakai M."/>
            <person name="Ogura K."/>
            <person name="Otsuka R."/>
            <person name="Nakazawa H."/>
            <person name="Takamiya M."/>
            <person name="Ohfuku Y."/>
            <person name="Funahashi T."/>
            <person name="Tanaka T."/>
            <person name="Kudoh Y."/>
            <person name="Yamazaki J."/>
            <person name="Kushida N."/>
            <person name="Oguchi A."/>
            <person name="Aoki K."/>
            <person name="Yoshizawa T."/>
            <person name="Nakamura Y."/>
            <person name="Robb F.T."/>
            <person name="Horikoshi K."/>
            <person name="Masuchi Y."/>
            <person name="Shizuya H."/>
            <person name="Kikuchi H."/>
        </authorList>
    </citation>
    <scope>NUCLEOTIDE SEQUENCE [LARGE SCALE GENOMIC DNA]</scope>
    <source>
        <strain>ATCC 700860 / DSM 12428 / JCM 9974 / NBRC 100139 / OT-3</strain>
    </source>
</reference>
<dbReference type="EMBL" id="BA000001">
    <property type="protein sequence ID" value="BAA30401.1"/>
    <property type="molecule type" value="Genomic_DNA"/>
</dbReference>
<dbReference type="PIR" id="A71000">
    <property type="entry name" value="A71000"/>
</dbReference>
<dbReference type="RefSeq" id="WP_010885384.1">
    <property type="nucleotide sequence ID" value="NC_000961.1"/>
</dbReference>
<dbReference type="SMR" id="O59008"/>
<dbReference type="EnsemblBacteria" id="BAA30401">
    <property type="protein sequence ID" value="BAA30401"/>
    <property type="gene ID" value="BAA30401"/>
</dbReference>
<dbReference type="GeneID" id="1443620"/>
<dbReference type="KEGG" id="pho:PH1297"/>
<dbReference type="eggNOG" id="arCOG02123">
    <property type="taxonomic scope" value="Archaea"/>
</dbReference>
<dbReference type="Proteomes" id="UP000000752">
    <property type="component" value="Chromosome"/>
</dbReference>
<dbReference type="Gene3D" id="1.20.120.330">
    <property type="entry name" value="Nucleotidyltransferases domain 2"/>
    <property type="match status" value="1"/>
</dbReference>
<dbReference type="InterPro" id="IPR007842">
    <property type="entry name" value="HEPN_dom"/>
</dbReference>
<dbReference type="InterPro" id="IPR052226">
    <property type="entry name" value="UPF0332_toxin"/>
</dbReference>
<dbReference type="PANTHER" id="PTHR36565:SF5">
    <property type="entry name" value="TOXIN MJ0605-RELATED"/>
    <property type="match status" value="1"/>
</dbReference>
<dbReference type="PANTHER" id="PTHR36565">
    <property type="entry name" value="UPF0332 PROTEIN TM_1000"/>
    <property type="match status" value="1"/>
</dbReference>
<dbReference type="Pfam" id="PF05168">
    <property type="entry name" value="HEPN"/>
    <property type="match status" value="1"/>
</dbReference>
<name>Y1297_PYRHO</name>
<gene>
    <name type="ordered locus">PH1297</name>
</gene>
<sequence length="142" mass="16673">MDVPEEVEKHIKITEEELSSAYLLLENGKLRDSISRAYYSMFHAAKALLLLKGIDPRKHSGVIRMFGLHFVNSGFIERVYAKYLTHSRSDQRLTMMSITNQVMRKLKTLLKVLSASWRELKVFWRRLKMDKKAQALNEFLKL</sequence>